<evidence type="ECO:0000250" key="1"/>
<evidence type="ECO:0000255" key="2"/>
<evidence type="ECO:0000305" key="3"/>
<feature type="chain" id="PRO_0000388306" description="UPF0754 membrane protein SaurJH1_1933">
    <location>
        <begin position="1"/>
        <end position="374"/>
    </location>
</feature>
<feature type="transmembrane region" description="Helical" evidence="2">
    <location>
        <begin position="4"/>
        <end position="24"/>
    </location>
</feature>
<feature type="transmembrane region" description="Helical" evidence="2">
    <location>
        <begin position="354"/>
        <end position="374"/>
    </location>
</feature>
<protein>
    <recommendedName>
        <fullName>UPF0754 membrane protein SaurJH1_1933</fullName>
    </recommendedName>
</protein>
<reference key="1">
    <citation type="submission" date="2007-06" db="EMBL/GenBank/DDBJ databases">
        <title>Complete sequence of chromosome of Staphylococcus aureus subsp. aureus JH1.</title>
        <authorList>
            <consortium name="US DOE Joint Genome Institute"/>
            <person name="Copeland A."/>
            <person name="Lucas S."/>
            <person name="Lapidus A."/>
            <person name="Barry K."/>
            <person name="Detter J.C."/>
            <person name="Glavina del Rio T."/>
            <person name="Hammon N."/>
            <person name="Israni S."/>
            <person name="Dalin E."/>
            <person name="Tice H."/>
            <person name="Pitluck S."/>
            <person name="Chain P."/>
            <person name="Malfatti S."/>
            <person name="Shin M."/>
            <person name="Vergez L."/>
            <person name="Schmutz J."/>
            <person name="Larimer F."/>
            <person name="Land M."/>
            <person name="Hauser L."/>
            <person name="Kyrpides N."/>
            <person name="Ivanova N."/>
            <person name="Tomasz A."/>
            <person name="Richardson P."/>
        </authorList>
    </citation>
    <scope>NUCLEOTIDE SEQUENCE [LARGE SCALE GENOMIC DNA]</scope>
    <source>
        <strain>JH1</strain>
    </source>
</reference>
<dbReference type="EMBL" id="CP000736">
    <property type="protein sequence ID" value="ABR52767.1"/>
    <property type="molecule type" value="Genomic_DNA"/>
</dbReference>
<dbReference type="SMR" id="A6U2U9"/>
<dbReference type="KEGG" id="sah:SaurJH1_1933"/>
<dbReference type="HOGENOM" id="CLU_042384_0_0_9"/>
<dbReference type="GO" id="GO:0005886">
    <property type="term" value="C:plasma membrane"/>
    <property type="evidence" value="ECO:0007669"/>
    <property type="project" value="UniProtKB-SubCell"/>
</dbReference>
<dbReference type="InterPro" id="IPR007383">
    <property type="entry name" value="DUF445"/>
</dbReference>
<dbReference type="InterPro" id="IPR016991">
    <property type="entry name" value="UCP032178"/>
</dbReference>
<dbReference type="PANTHER" id="PTHR35791">
    <property type="entry name" value="UPF0754 MEMBRANE PROTEIN YHEB"/>
    <property type="match status" value="1"/>
</dbReference>
<dbReference type="PANTHER" id="PTHR35791:SF1">
    <property type="entry name" value="UPF0754 MEMBRANE PROTEIN YHEB"/>
    <property type="match status" value="1"/>
</dbReference>
<dbReference type="Pfam" id="PF04286">
    <property type="entry name" value="DUF445"/>
    <property type="match status" value="1"/>
</dbReference>
<dbReference type="PIRSF" id="PIRSF032178">
    <property type="entry name" value="UCP032178"/>
    <property type="match status" value="1"/>
</dbReference>
<accession>A6U2U9</accession>
<sequence length="374" mass="42706">MNALFIIIFMIVVGAIIGGITNVIAIRMLFHPFKPYYIFKFRVPFTPGLIPKRREEIATKIGQVIEEHLLTETLINEKLKSEQSQQAIESMIQQQLQKLTKDQLSIKQITSQIDIDLEQVLQTNGNQYIESQLNNYYTKHQNQTIASLLPNQLVTFLDQHVDNATDLLCDRARNYLSSAKGTQDINDMLDTFFHEKGKLIGMLQMFMTKESIADRIQQELIRLTSHPKARTIVTSLITNEYQTFKDKPLNELLDASQFNEIAENLSVYVTTYASNQANKPVVTLMPQFVDYLEGQLSSKLANLIIEKLSIHLSTIMKKVDLRGLIEEQINTFDLDYIEKLIIEIANKELKLIMSLGFILGGIIGFFQGLVAIFV</sequence>
<name>Y1933_STAA2</name>
<keyword id="KW-1003">Cell membrane</keyword>
<keyword id="KW-0472">Membrane</keyword>
<keyword id="KW-0812">Transmembrane</keyword>
<keyword id="KW-1133">Transmembrane helix</keyword>
<comment type="subcellular location">
    <subcellularLocation>
        <location evidence="1">Cell membrane</location>
        <topology evidence="1">Multi-pass membrane protein</topology>
    </subcellularLocation>
</comment>
<comment type="similarity">
    <text evidence="3">Belongs to the UPF0754 family.</text>
</comment>
<gene>
    <name type="ordered locus">SaurJH1_1933</name>
</gene>
<proteinExistence type="inferred from homology"/>
<organism>
    <name type="scientific">Staphylococcus aureus (strain JH1)</name>
    <dbReference type="NCBI Taxonomy" id="359787"/>
    <lineage>
        <taxon>Bacteria</taxon>
        <taxon>Bacillati</taxon>
        <taxon>Bacillota</taxon>
        <taxon>Bacilli</taxon>
        <taxon>Bacillales</taxon>
        <taxon>Staphylococcaceae</taxon>
        <taxon>Staphylococcus</taxon>
    </lineage>
</organism>